<evidence type="ECO:0000255" key="1">
    <source>
        <dbReference type="HAMAP-Rule" id="MF_00005"/>
    </source>
</evidence>
<protein>
    <recommendedName>
        <fullName evidence="1">Argininosuccinate synthase</fullName>
        <ecNumber evidence="1">6.3.4.5</ecNumber>
    </recommendedName>
    <alternativeName>
        <fullName evidence="1">Citrulline--aspartate ligase</fullName>
    </alternativeName>
</protein>
<accession>Q8PK26</accession>
<proteinExistence type="inferred from homology"/>
<comment type="catalytic activity">
    <reaction evidence="1">
        <text>L-citrulline + L-aspartate + ATP = 2-(N(omega)-L-arginino)succinate + AMP + diphosphate + H(+)</text>
        <dbReference type="Rhea" id="RHEA:10932"/>
        <dbReference type="ChEBI" id="CHEBI:15378"/>
        <dbReference type="ChEBI" id="CHEBI:29991"/>
        <dbReference type="ChEBI" id="CHEBI:30616"/>
        <dbReference type="ChEBI" id="CHEBI:33019"/>
        <dbReference type="ChEBI" id="CHEBI:57472"/>
        <dbReference type="ChEBI" id="CHEBI:57743"/>
        <dbReference type="ChEBI" id="CHEBI:456215"/>
        <dbReference type="EC" id="6.3.4.5"/>
    </reaction>
</comment>
<comment type="pathway">
    <text evidence="1">Amino-acid biosynthesis; L-arginine biosynthesis; L-arginine from L-ornithine and carbamoyl phosphate: step 2/3.</text>
</comment>
<comment type="subunit">
    <text evidence="1">Homotetramer.</text>
</comment>
<comment type="subcellular location">
    <subcellularLocation>
        <location evidence="1">Cytoplasm</location>
    </subcellularLocation>
</comment>
<comment type="similarity">
    <text evidence="1">Belongs to the argininosuccinate synthase family. Type 1 subfamily.</text>
</comment>
<organism>
    <name type="scientific">Xanthomonas axonopodis pv. citri (strain 306)</name>
    <dbReference type="NCBI Taxonomy" id="190486"/>
    <lineage>
        <taxon>Bacteria</taxon>
        <taxon>Pseudomonadati</taxon>
        <taxon>Pseudomonadota</taxon>
        <taxon>Gammaproteobacteria</taxon>
        <taxon>Lysobacterales</taxon>
        <taxon>Lysobacteraceae</taxon>
        <taxon>Xanthomonas</taxon>
    </lineage>
</organism>
<gene>
    <name evidence="1" type="primary">argG</name>
    <name type="ordered locus">XAC2351</name>
</gene>
<keyword id="KW-0028">Amino-acid biosynthesis</keyword>
<keyword id="KW-0055">Arginine biosynthesis</keyword>
<keyword id="KW-0067">ATP-binding</keyword>
<keyword id="KW-0963">Cytoplasm</keyword>
<keyword id="KW-0436">Ligase</keyword>
<keyword id="KW-0547">Nucleotide-binding</keyword>
<reference key="1">
    <citation type="journal article" date="2002" name="Nature">
        <title>Comparison of the genomes of two Xanthomonas pathogens with differing host specificities.</title>
        <authorList>
            <person name="da Silva A.C.R."/>
            <person name="Ferro J.A."/>
            <person name="Reinach F.C."/>
            <person name="Farah C.S."/>
            <person name="Furlan L.R."/>
            <person name="Quaggio R.B."/>
            <person name="Monteiro-Vitorello C.B."/>
            <person name="Van Sluys M.A."/>
            <person name="Almeida N.F. Jr."/>
            <person name="Alves L.M.C."/>
            <person name="do Amaral A.M."/>
            <person name="Bertolini M.C."/>
            <person name="Camargo L.E.A."/>
            <person name="Camarotte G."/>
            <person name="Cannavan F."/>
            <person name="Cardozo J."/>
            <person name="Chambergo F."/>
            <person name="Ciapina L.P."/>
            <person name="Cicarelli R.M.B."/>
            <person name="Coutinho L.L."/>
            <person name="Cursino-Santos J.R."/>
            <person name="El-Dorry H."/>
            <person name="Faria J.B."/>
            <person name="Ferreira A.J.S."/>
            <person name="Ferreira R.C.C."/>
            <person name="Ferro M.I.T."/>
            <person name="Formighieri E.F."/>
            <person name="Franco M.C."/>
            <person name="Greggio C.C."/>
            <person name="Gruber A."/>
            <person name="Katsuyama A.M."/>
            <person name="Kishi L.T."/>
            <person name="Leite R.P."/>
            <person name="Lemos E.G.M."/>
            <person name="Lemos M.V.F."/>
            <person name="Locali E.C."/>
            <person name="Machado M.A."/>
            <person name="Madeira A.M.B.N."/>
            <person name="Martinez-Rossi N.M."/>
            <person name="Martins E.C."/>
            <person name="Meidanis J."/>
            <person name="Menck C.F.M."/>
            <person name="Miyaki C.Y."/>
            <person name="Moon D.H."/>
            <person name="Moreira L.M."/>
            <person name="Novo M.T.M."/>
            <person name="Okura V.K."/>
            <person name="Oliveira M.C."/>
            <person name="Oliveira V.R."/>
            <person name="Pereira H.A."/>
            <person name="Rossi A."/>
            <person name="Sena J.A.D."/>
            <person name="Silva C."/>
            <person name="de Souza R.F."/>
            <person name="Spinola L.A.F."/>
            <person name="Takita M.A."/>
            <person name="Tamura R.E."/>
            <person name="Teixeira E.C."/>
            <person name="Tezza R.I.D."/>
            <person name="Trindade dos Santos M."/>
            <person name="Truffi D."/>
            <person name="Tsai S.M."/>
            <person name="White F.F."/>
            <person name="Setubal J.C."/>
            <person name="Kitajima J.P."/>
        </authorList>
    </citation>
    <scope>NUCLEOTIDE SEQUENCE [LARGE SCALE GENOMIC DNA]</scope>
    <source>
        <strain>306</strain>
    </source>
</reference>
<sequence>MMSAASTNPEFPIATSGTKDIVLAFSGGLDTSFCIPYLQERGYAVHTVFADTGGVDAEEREFIEKRAAELGAASHVTVDGGPAIWEGFVKPFVWAGEGYQGQYPLLVSDRYLIVDAALKRAEELGTRIIAHGCTGMGNDQVRFDLAVKALGDYQIVAPIREIQKEHTQTRAYEQKYLEARGFGVRAKQQAYTINENLLGLTMSGGEIDRWEAPGEGARGWCAPRSAWPSEALTVTLKFVEGEAVELDGKPLPGAKILAKLNTLFAQYGVGRGVYTGDTVIGLKGRIVFEAPGLISLLTAHRALEDAVLTKQQNRFKPDVARKWVELVYEGFYHDPLKSDIEAFLKSSQAKVNGEVTLETRGGRVDAVAVRSPHLLNTKGATYAQSADWGVEEAEGFIKLFGMSSTLYAQVNR</sequence>
<feature type="chain" id="PRO_0000148666" description="Argininosuccinate synthase">
    <location>
        <begin position="1"/>
        <end position="412"/>
    </location>
</feature>
<feature type="binding site" evidence="1">
    <location>
        <begin position="24"/>
        <end position="32"/>
    </location>
    <ligand>
        <name>ATP</name>
        <dbReference type="ChEBI" id="CHEBI:30616"/>
    </ligand>
</feature>
<feature type="binding site" evidence="1">
    <location>
        <position position="50"/>
    </location>
    <ligand>
        <name>ATP</name>
        <dbReference type="ChEBI" id="CHEBI:30616"/>
    </ligand>
</feature>
<feature type="binding site" evidence="1">
    <location>
        <position position="103"/>
    </location>
    <ligand>
        <name>L-citrulline</name>
        <dbReference type="ChEBI" id="CHEBI:57743"/>
    </ligand>
</feature>
<feature type="binding site" evidence="1">
    <location>
        <position position="108"/>
    </location>
    <ligand>
        <name>L-citrulline</name>
        <dbReference type="ChEBI" id="CHEBI:57743"/>
    </ligand>
</feature>
<feature type="binding site" evidence="1">
    <location>
        <position position="132"/>
    </location>
    <ligand>
        <name>ATP</name>
        <dbReference type="ChEBI" id="CHEBI:30616"/>
    </ligand>
</feature>
<feature type="binding site" evidence="1">
    <location>
        <position position="134"/>
    </location>
    <ligand>
        <name>L-aspartate</name>
        <dbReference type="ChEBI" id="CHEBI:29991"/>
    </ligand>
</feature>
<feature type="binding site" evidence="1">
    <location>
        <position position="138"/>
    </location>
    <ligand>
        <name>L-aspartate</name>
        <dbReference type="ChEBI" id="CHEBI:29991"/>
    </ligand>
</feature>
<feature type="binding site" evidence="1">
    <location>
        <position position="138"/>
    </location>
    <ligand>
        <name>L-citrulline</name>
        <dbReference type="ChEBI" id="CHEBI:57743"/>
    </ligand>
</feature>
<feature type="binding site" evidence="1">
    <location>
        <position position="139"/>
    </location>
    <ligand>
        <name>L-aspartate</name>
        <dbReference type="ChEBI" id="CHEBI:29991"/>
    </ligand>
</feature>
<feature type="binding site" evidence="1">
    <location>
        <position position="142"/>
    </location>
    <ligand>
        <name>L-citrulline</name>
        <dbReference type="ChEBI" id="CHEBI:57743"/>
    </ligand>
</feature>
<dbReference type="EC" id="6.3.4.5" evidence="1"/>
<dbReference type="EMBL" id="AE008923">
    <property type="protein sequence ID" value="AAM37203.1"/>
    <property type="molecule type" value="Genomic_DNA"/>
</dbReference>
<dbReference type="SMR" id="Q8PK26"/>
<dbReference type="KEGG" id="xac:XAC2351"/>
<dbReference type="eggNOG" id="COG0137">
    <property type="taxonomic scope" value="Bacteria"/>
</dbReference>
<dbReference type="HOGENOM" id="CLU_032784_4_2_6"/>
<dbReference type="UniPathway" id="UPA00068">
    <property type="reaction ID" value="UER00113"/>
</dbReference>
<dbReference type="Proteomes" id="UP000000576">
    <property type="component" value="Chromosome"/>
</dbReference>
<dbReference type="GO" id="GO:0005737">
    <property type="term" value="C:cytoplasm"/>
    <property type="evidence" value="ECO:0007669"/>
    <property type="project" value="UniProtKB-SubCell"/>
</dbReference>
<dbReference type="GO" id="GO:0004055">
    <property type="term" value="F:argininosuccinate synthase activity"/>
    <property type="evidence" value="ECO:0007669"/>
    <property type="project" value="UniProtKB-UniRule"/>
</dbReference>
<dbReference type="GO" id="GO:0005524">
    <property type="term" value="F:ATP binding"/>
    <property type="evidence" value="ECO:0007669"/>
    <property type="project" value="UniProtKB-UniRule"/>
</dbReference>
<dbReference type="GO" id="GO:0000053">
    <property type="term" value="P:argininosuccinate metabolic process"/>
    <property type="evidence" value="ECO:0007669"/>
    <property type="project" value="TreeGrafter"/>
</dbReference>
<dbReference type="GO" id="GO:0006526">
    <property type="term" value="P:L-arginine biosynthetic process"/>
    <property type="evidence" value="ECO:0007669"/>
    <property type="project" value="UniProtKB-UniRule"/>
</dbReference>
<dbReference type="GO" id="GO:0000050">
    <property type="term" value="P:urea cycle"/>
    <property type="evidence" value="ECO:0007669"/>
    <property type="project" value="TreeGrafter"/>
</dbReference>
<dbReference type="CDD" id="cd01999">
    <property type="entry name" value="ASS"/>
    <property type="match status" value="1"/>
</dbReference>
<dbReference type="FunFam" id="3.40.50.620:FF:000141">
    <property type="entry name" value="Argininosuccinate synthase"/>
    <property type="match status" value="1"/>
</dbReference>
<dbReference type="Gene3D" id="3.90.1260.10">
    <property type="entry name" value="Argininosuccinate synthetase, chain A, domain 2"/>
    <property type="match status" value="1"/>
</dbReference>
<dbReference type="Gene3D" id="3.40.50.620">
    <property type="entry name" value="HUPs"/>
    <property type="match status" value="1"/>
</dbReference>
<dbReference type="HAMAP" id="MF_00005">
    <property type="entry name" value="Arg_succ_synth_type1"/>
    <property type="match status" value="1"/>
</dbReference>
<dbReference type="InterPro" id="IPR048268">
    <property type="entry name" value="Arginosuc_syn_C"/>
</dbReference>
<dbReference type="InterPro" id="IPR048267">
    <property type="entry name" value="Arginosuc_syn_N"/>
</dbReference>
<dbReference type="InterPro" id="IPR001518">
    <property type="entry name" value="Arginosuc_synth"/>
</dbReference>
<dbReference type="InterPro" id="IPR018223">
    <property type="entry name" value="Arginosuc_synth_CS"/>
</dbReference>
<dbReference type="InterPro" id="IPR023434">
    <property type="entry name" value="Arginosuc_synth_type_1_subfam"/>
</dbReference>
<dbReference type="InterPro" id="IPR024074">
    <property type="entry name" value="AS_cat/multimer_dom_body"/>
</dbReference>
<dbReference type="InterPro" id="IPR014729">
    <property type="entry name" value="Rossmann-like_a/b/a_fold"/>
</dbReference>
<dbReference type="NCBIfam" id="TIGR00032">
    <property type="entry name" value="argG"/>
    <property type="match status" value="1"/>
</dbReference>
<dbReference type="NCBIfam" id="NF003385">
    <property type="entry name" value="PRK04527.1"/>
    <property type="match status" value="1"/>
</dbReference>
<dbReference type="PANTHER" id="PTHR11587">
    <property type="entry name" value="ARGININOSUCCINATE SYNTHASE"/>
    <property type="match status" value="1"/>
</dbReference>
<dbReference type="PANTHER" id="PTHR11587:SF2">
    <property type="entry name" value="ARGININOSUCCINATE SYNTHASE"/>
    <property type="match status" value="1"/>
</dbReference>
<dbReference type="Pfam" id="PF20979">
    <property type="entry name" value="Arginosuc_syn_C"/>
    <property type="match status" value="1"/>
</dbReference>
<dbReference type="Pfam" id="PF00764">
    <property type="entry name" value="Arginosuc_synth"/>
    <property type="match status" value="1"/>
</dbReference>
<dbReference type="SUPFAM" id="SSF52402">
    <property type="entry name" value="Adenine nucleotide alpha hydrolases-like"/>
    <property type="match status" value="1"/>
</dbReference>
<dbReference type="SUPFAM" id="SSF69864">
    <property type="entry name" value="Argininosuccinate synthetase, C-terminal domain"/>
    <property type="match status" value="1"/>
</dbReference>
<dbReference type="PROSITE" id="PS00564">
    <property type="entry name" value="ARGININOSUCCIN_SYN_1"/>
    <property type="match status" value="1"/>
</dbReference>
<dbReference type="PROSITE" id="PS00565">
    <property type="entry name" value="ARGININOSUCCIN_SYN_2"/>
    <property type="match status" value="1"/>
</dbReference>
<name>ASSY_XANAC</name>